<comment type="function">
    <text evidence="1">The phosphoenolpyruvate-dependent sugar phosphotransferase system (sugar PTS), a major carbohydrate active transport system, catalyzes the phosphorylation of incoming sugar substrates concomitantly with their translocation across the cell membrane. The enzyme II UlaABC PTS system is involved in ascorbate transport.</text>
</comment>
<comment type="subunit">
    <text evidence="1">Homodimer.</text>
</comment>
<comment type="subcellular location">
    <subcellularLocation>
        <location evidence="1">Cell inner membrane</location>
        <topology evidence="1">Multi-pass membrane protein</topology>
    </subcellularLocation>
</comment>
<comment type="induction">
    <text evidence="1">Induced by L-ascorbate. Repressed by UlaR.</text>
</comment>
<comment type="domain">
    <text evidence="1">In classical PTS systems, the PTS EIIC type-2 domain forms the translocation channel and contains the specific substrate-binding site. UlaA does not exhibit the topological features of any recognized enzyme IIC.</text>
</comment>
<comment type="similarity">
    <text evidence="2">Belongs to the UlaA family.</text>
</comment>
<comment type="sequence caution" evidence="2">
    <conflict type="erroneous initiation">
        <sequence resource="EMBL-CDS" id="AAL23203"/>
    </conflict>
</comment>
<name>ULAA_SALTY</name>
<protein>
    <recommendedName>
        <fullName evidence="1">Ascorbate-specific PTS system EIIC component</fullName>
    </recommendedName>
    <alternativeName>
        <fullName evidence="1">Ascorbate-specific permease IIC component UlaA</fullName>
    </alternativeName>
</protein>
<reference key="1">
    <citation type="journal article" date="2001" name="Nature">
        <title>Complete genome sequence of Salmonella enterica serovar Typhimurium LT2.</title>
        <authorList>
            <person name="McClelland M."/>
            <person name="Sanderson K.E."/>
            <person name="Spieth J."/>
            <person name="Clifton S.W."/>
            <person name="Latreille P."/>
            <person name="Courtney L."/>
            <person name="Porwollik S."/>
            <person name="Ali J."/>
            <person name="Dante M."/>
            <person name="Du F."/>
            <person name="Hou S."/>
            <person name="Layman D."/>
            <person name="Leonard S."/>
            <person name="Nguyen C."/>
            <person name="Scott K."/>
            <person name="Holmes A."/>
            <person name="Grewal N."/>
            <person name="Mulvaney E."/>
            <person name="Ryan E."/>
            <person name="Sun H."/>
            <person name="Florea L."/>
            <person name="Miller W."/>
            <person name="Stoneking T."/>
            <person name="Nhan M."/>
            <person name="Waterston R."/>
            <person name="Wilson R.K."/>
        </authorList>
    </citation>
    <scope>NUCLEOTIDE SEQUENCE [LARGE SCALE GENOMIC DNA]</scope>
    <source>
        <strain>LT2 / SGSC1412 / ATCC 700720</strain>
    </source>
</reference>
<organism>
    <name type="scientific">Salmonella typhimurium (strain LT2 / SGSC1412 / ATCC 700720)</name>
    <dbReference type="NCBI Taxonomy" id="99287"/>
    <lineage>
        <taxon>Bacteria</taxon>
        <taxon>Pseudomonadati</taxon>
        <taxon>Pseudomonadota</taxon>
        <taxon>Gammaproteobacteria</taxon>
        <taxon>Enterobacterales</taxon>
        <taxon>Enterobacteriaceae</taxon>
        <taxon>Salmonella</taxon>
    </lineage>
</organism>
<proteinExistence type="inferred from homology"/>
<dbReference type="EMBL" id="AE006468">
    <property type="protein sequence ID" value="AAL23203.1"/>
    <property type="status" value="ALT_INIT"/>
    <property type="molecule type" value="Genomic_DNA"/>
</dbReference>
<dbReference type="SMR" id="Q8ZK90"/>
<dbReference type="STRING" id="99287.STM4383"/>
<dbReference type="PaxDb" id="99287-STM4383"/>
<dbReference type="KEGG" id="stm:STM4383"/>
<dbReference type="PATRIC" id="fig|99287.12.peg.4608"/>
<dbReference type="HOGENOM" id="CLU_031784_1_0_6"/>
<dbReference type="OMA" id="IAHQQMF"/>
<dbReference type="PhylomeDB" id="Q8ZK90"/>
<dbReference type="Proteomes" id="UP000001014">
    <property type="component" value="Chromosome"/>
</dbReference>
<dbReference type="GO" id="GO:0005886">
    <property type="term" value="C:plasma membrane"/>
    <property type="evidence" value="ECO:0007669"/>
    <property type="project" value="UniProtKB-SubCell"/>
</dbReference>
<dbReference type="GO" id="GO:0090585">
    <property type="term" value="F:protein-phosphocysteine-L-ascorbate-phosphotransferase system transporter activity"/>
    <property type="evidence" value="ECO:0000318"/>
    <property type="project" value="GO_Central"/>
</dbReference>
<dbReference type="GO" id="GO:0015882">
    <property type="term" value="P:L-ascorbic acid transmembrane transport"/>
    <property type="evidence" value="ECO:0000318"/>
    <property type="project" value="GO_Central"/>
</dbReference>
<dbReference type="GO" id="GO:0009401">
    <property type="term" value="P:phosphoenolpyruvate-dependent sugar phosphotransferase system"/>
    <property type="evidence" value="ECO:0000318"/>
    <property type="project" value="GO_Central"/>
</dbReference>
<dbReference type="InterPro" id="IPR051562">
    <property type="entry name" value="Ascorbate-PTS_EIIC"/>
</dbReference>
<dbReference type="InterPro" id="IPR004703">
    <property type="entry name" value="PTS_sugar-sp_permease"/>
</dbReference>
<dbReference type="NCBIfam" id="NF006919">
    <property type="entry name" value="PRK09410.1-1"/>
    <property type="match status" value="1"/>
</dbReference>
<dbReference type="PANTHER" id="PTHR33843">
    <property type="entry name" value="ASCORBATE-SPECIFIC PTS SYSTEM EIIC COMPONENT"/>
    <property type="match status" value="1"/>
</dbReference>
<dbReference type="PANTHER" id="PTHR33843:SF4">
    <property type="entry name" value="ASCORBATE-SPECIFIC PTS SYSTEM EIIC COMPONENT"/>
    <property type="match status" value="1"/>
</dbReference>
<dbReference type="Pfam" id="PF03611">
    <property type="entry name" value="EIIC-GAT"/>
    <property type="match status" value="1"/>
</dbReference>
<keyword id="KW-0997">Cell inner membrane</keyword>
<keyword id="KW-1003">Cell membrane</keyword>
<keyword id="KW-0472">Membrane</keyword>
<keyword id="KW-0598">Phosphotransferase system</keyword>
<keyword id="KW-1185">Reference proteome</keyword>
<keyword id="KW-0762">Sugar transport</keyword>
<keyword id="KW-0812">Transmembrane</keyword>
<keyword id="KW-1133">Transmembrane helix</keyword>
<keyword id="KW-0813">Transport</keyword>
<accession>Q8ZK90</accession>
<gene>
    <name type="primary">ulaA</name>
    <name type="ordered locus">STM4383</name>
</gene>
<feature type="chain" id="PRO_0000230660" description="Ascorbate-specific PTS system EIIC component">
    <location>
        <begin position="1"/>
        <end position="465"/>
    </location>
</feature>
<feature type="transmembrane region" description="Helical" evidence="1">
    <location>
        <begin position="14"/>
        <end position="34"/>
    </location>
</feature>
<feature type="transmembrane region" description="Helical" evidence="1">
    <location>
        <begin position="38"/>
        <end position="58"/>
    </location>
</feature>
<feature type="transmembrane region" description="Helical" evidence="1">
    <location>
        <begin position="101"/>
        <end position="121"/>
    </location>
</feature>
<feature type="transmembrane region" description="Helical" evidence="1">
    <location>
        <begin position="141"/>
        <end position="161"/>
    </location>
</feature>
<feature type="transmembrane region" description="Helical" evidence="1">
    <location>
        <begin position="233"/>
        <end position="253"/>
    </location>
</feature>
<feature type="transmembrane region" description="Helical" evidence="1">
    <location>
        <begin position="263"/>
        <end position="283"/>
    </location>
</feature>
<feature type="transmembrane region" description="Helical" evidence="1">
    <location>
        <begin position="316"/>
        <end position="336"/>
    </location>
</feature>
<feature type="transmembrane region" description="Helical" evidence="1">
    <location>
        <begin position="338"/>
        <end position="358"/>
    </location>
</feature>
<feature type="transmembrane region" description="Helical" evidence="1">
    <location>
        <begin position="379"/>
        <end position="399"/>
    </location>
</feature>
<feature type="transmembrane region" description="Helical" evidence="1">
    <location>
        <begin position="427"/>
        <end position="447"/>
    </location>
</feature>
<feature type="binding site" evidence="1">
    <location>
        <begin position="86"/>
        <end position="87"/>
    </location>
    <ligand>
        <name>L-ascorbate</name>
        <dbReference type="ChEBI" id="CHEBI:38290"/>
    </ligand>
</feature>
<feature type="binding site" evidence="1">
    <location>
        <begin position="135"/>
        <end position="139"/>
    </location>
    <ligand>
        <name>L-ascorbate</name>
        <dbReference type="ChEBI" id="CHEBI:38290"/>
    </ligand>
</feature>
<feature type="binding site" evidence="1">
    <location>
        <begin position="194"/>
        <end position="195"/>
    </location>
    <ligand>
        <name>L-ascorbate</name>
        <dbReference type="ChEBI" id="CHEBI:38290"/>
    </ligand>
</feature>
<feature type="binding site" evidence="1">
    <location>
        <position position="314"/>
    </location>
    <ligand>
        <name>L-ascorbate</name>
        <dbReference type="ChEBI" id="CHEBI:38290"/>
    </ligand>
</feature>
<sequence>MEILYNIFTIFFNQVMTNAPLLLGIVTCLGYILLRKSVSVIIKGTIKTIIGFMLLQAGSGILTSTFKPVVAKMSEVYGINGAISDTYASMMATIERMGDAYSWVGYAVLLALALNICYVLLRRITGIRTIMLTGHIMFQQAGLIAVSFYIFGYSMWTTIICTAILVSLYWGITSNMMYKPTQEVTDGCGFSIGHQQQFASWIAYKVAPFLGKKEESVEDLKLPGWLNIFHDNIVSTAIVMTIFFGAILLSFGIDTVQAMAGKTHWTIYILQTGFSFAVAIFIITQGVRMFVAELSEAFNGISQRLIPGAVLAIDCAAIYSFAPNAVVWGFMWGTIGQLIAVGILVACGSSILIIPGFIPMFFSNATIGVFANHFGGWRAALKICLVMGMIEIFGCVWAVKLTGMSAWMGMADWSILAPPMMQGFFSLGIAFMAVIIVIALAYMFFAGRALRAEEDAEKQLAEQSA</sequence>
<evidence type="ECO:0000250" key="1">
    <source>
        <dbReference type="UniProtKB" id="P39301"/>
    </source>
</evidence>
<evidence type="ECO:0000305" key="2"/>